<name>RF1_STRU0</name>
<reference key="1">
    <citation type="journal article" date="2009" name="BMC Genomics">
        <title>Evidence for niche adaptation in the genome of the bovine pathogen Streptococcus uberis.</title>
        <authorList>
            <person name="Ward P.N."/>
            <person name="Holden M.T.G."/>
            <person name="Leigh J.A."/>
            <person name="Lennard N."/>
            <person name="Bignell A."/>
            <person name="Barron A."/>
            <person name="Clark L."/>
            <person name="Quail M.A."/>
            <person name="Woodward J."/>
            <person name="Barrell B.G."/>
            <person name="Egan S.A."/>
            <person name="Field T.R."/>
            <person name="Maskell D."/>
            <person name="Kehoe M."/>
            <person name="Dowson C.G."/>
            <person name="Chanter N."/>
            <person name="Whatmore A.M."/>
            <person name="Bentley S.D."/>
            <person name="Parkhill J."/>
        </authorList>
    </citation>
    <scope>NUCLEOTIDE SEQUENCE [LARGE SCALE GENOMIC DNA]</scope>
    <source>
        <strain>ATCC BAA-854 / 0140J</strain>
    </source>
</reference>
<comment type="function">
    <text evidence="1">Peptide chain release factor 1 directs the termination of translation in response to the peptide chain termination codons UAG and UAA.</text>
</comment>
<comment type="subcellular location">
    <subcellularLocation>
        <location evidence="1">Cytoplasm</location>
    </subcellularLocation>
</comment>
<comment type="PTM">
    <text evidence="1">Methylated by PrmC. Methylation increases the termination efficiency of RF1.</text>
</comment>
<comment type="similarity">
    <text evidence="1">Belongs to the prokaryotic/mitochondrial release factor family.</text>
</comment>
<dbReference type="EMBL" id="AM946015">
    <property type="protein sequence ID" value="CAR41933.1"/>
    <property type="molecule type" value="Genomic_DNA"/>
</dbReference>
<dbReference type="RefSeq" id="WP_012658373.1">
    <property type="nucleotide sequence ID" value="NC_012004.1"/>
</dbReference>
<dbReference type="SMR" id="B9DS45"/>
<dbReference type="STRING" id="218495.SUB0871"/>
<dbReference type="KEGG" id="sub:SUB0871"/>
<dbReference type="eggNOG" id="COG0216">
    <property type="taxonomic scope" value="Bacteria"/>
</dbReference>
<dbReference type="HOGENOM" id="CLU_036856_0_1_9"/>
<dbReference type="OrthoDB" id="9806673at2"/>
<dbReference type="Proteomes" id="UP000000449">
    <property type="component" value="Chromosome"/>
</dbReference>
<dbReference type="GO" id="GO:0005737">
    <property type="term" value="C:cytoplasm"/>
    <property type="evidence" value="ECO:0007669"/>
    <property type="project" value="UniProtKB-SubCell"/>
</dbReference>
<dbReference type="GO" id="GO:0016149">
    <property type="term" value="F:translation release factor activity, codon specific"/>
    <property type="evidence" value="ECO:0007669"/>
    <property type="project" value="UniProtKB-UniRule"/>
</dbReference>
<dbReference type="FunFam" id="3.30.160.20:FF:000027">
    <property type="entry name" value="Peptide chain release factor 1"/>
    <property type="match status" value="1"/>
</dbReference>
<dbReference type="FunFam" id="3.30.70.1660:FF:000002">
    <property type="entry name" value="Peptide chain release factor 1"/>
    <property type="match status" value="1"/>
</dbReference>
<dbReference type="FunFam" id="3.30.70.1660:FF:000004">
    <property type="entry name" value="Peptide chain release factor 1"/>
    <property type="match status" value="1"/>
</dbReference>
<dbReference type="Gene3D" id="3.30.160.20">
    <property type="match status" value="1"/>
</dbReference>
<dbReference type="Gene3D" id="3.30.70.1660">
    <property type="match status" value="2"/>
</dbReference>
<dbReference type="Gene3D" id="6.10.140.1950">
    <property type="match status" value="1"/>
</dbReference>
<dbReference type="HAMAP" id="MF_00093">
    <property type="entry name" value="Rel_fac_1"/>
    <property type="match status" value="1"/>
</dbReference>
<dbReference type="InterPro" id="IPR005139">
    <property type="entry name" value="PCRF"/>
</dbReference>
<dbReference type="InterPro" id="IPR000352">
    <property type="entry name" value="Pep_chain_release_fac_I"/>
</dbReference>
<dbReference type="InterPro" id="IPR045853">
    <property type="entry name" value="Pep_chain_release_fac_I_sf"/>
</dbReference>
<dbReference type="InterPro" id="IPR050057">
    <property type="entry name" value="Prokaryotic/Mito_RF"/>
</dbReference>
<dbReference type="InterPro" id="IPR004373">
    <property type="entry name" value="RF-1"/>
</dbReference>
<dbReference type="NCBIfam" id="TIGR00019">
    <property type="entry name" value="prfA"/>
    <property type="match status" value="1"/>
</dbReference>
<dbReference type="NCBIfam" id="NF001859">
    <property type="entry name" value="PRK00591.1"/>
    <property type="match status" value="1"/>
</dbReference>
<dbReference type="PANTHER" id="PTHR43804">
    <property type="entry name" value="LD18447P"/>
    <property type="match status" value="1"/>
</dbReference>
<dbReference type="PANTHER" id="PTHR43804:SF7">
    <property type="entry name" value="LD18447P"/>
    <property type="match status" value="1"/>
</dbReference>
<dbReference type="Pfam" id="PF03462">
    <property type="entry name" value="PCRF"/>
    <property type="match status" value="1"/>
</dbReference>
<dbReference type="Pfam" id="PF00472">
    <property type="entry name" value="RF-1"/>
    <property type="match status" value="1"/>
</dbReference>
<dbReference type="SMART" id="SM00937">
    <property type="entry name" value="PCRF"/>
    <property type="match status" value="1"/>
</dbReference>
<dbReference type="SUPFAM" id="SSF75620">
    <property type="entry name" value="Release factor"/>
    <property type="match status" value="1"/>
</dbReference>
<dbReference type="PROSITE" id="PS00745">
    <property type="entry name" value="RF_PROK_I"/>
    <property type="match status" value="1"/>
</dbReference>
<keyword id="KW-0963">Cytoplasm</keyword>
<keyword id="KW-0488">Methylation</keyword>
<keyword id="KW-0648">Protein biosynthesis</keyword>
<keyword id="KW-1185">Reference proteome</keyword>
<feature type="chain" id="PRO_1000193511" description="Peptide chain release factor 1">
    <location>
        <begin position="1"/>
        <end position="359"/>
    </location>
</feature>
<feature type="region of interest" description="Disordered" evidence="2">
    <location>
        <begin position="288"/>
        <end position="308"/>
    </location>
</feature>
<feature type="compositionally biased region" description="Basic and acidic residues" evidence="2">
    <location>
        <begin position="293"/>
        <end position="308"/>
    </location>
</feature>
<feature type="modified residue" description="N5-methylglutamine" evidence="1">
    <location>
        <position position="236"/>
    </location>
</feature>
<organism>
    <name type="scientific">Streptococcus uberis (strain ATCC BAA-854 / 0140J)</name>
    <dbReference type="NCBI Taxonomy" id="218495"/>
    <lineage>
        <taxon>Bacteria</taxon>
        <taxon>Bacillati</taxon>
        <taxon>Bacillota</taxon>
        <taxon>Bacilli</taxon>
        <taxon>Lactobacillales</taxon>
        <taxon>Streptococcaceae</taxon>
        <taxon>Streptococcus</taxon>
    </lineage>
</organism>
<proteinExistence type="inferred from homology"/>
<accession>B9DS45</accession>
<protein>
    <recommendedName>
        <fullName evidence="1">Peptide chain release factor 1</fullName>
        <shortName evidence="1">RF-1</shortName>
    </recommendedName>
</protein>
<gene>
    <name evidence="1" type="primary">prfA</name>
    <name type="ordered locus">SUB0871</name>
</gene>
<sequence length="359" mass="40740">MNIYDQLQSLEDRYEELGELLSDPEVVSDTKRFMELSKEEANTRETVATYRQYKDIIQSISDAEEMIKESGGDPEIEEMAKEELKESKVAKEDYEEKLKILLLPKDPNDDKNIILEIRGAAGGDEAALFAGDLLDMYQRFAESQGWRFEVMEASYNGVGGIKEVVAMVSGQSVYSKLKYESGAHRVQRVPVTESQGRVHTSTATVLVMPEIEDVEYDIDPKDLRIDIYHASGAGGQNVNKVATAVRIVHLPTNIKVEMQEERTQQKNRDKAMKIIRARVADHFAQIAQDEQDAERKSTIGTGDRSERIRTYNFPQNRVTDHRIGLTLQKLDTILSGKMDEVIDALVMYDQTQKLETLNQ</sequence>
<evidence type="ECO:0000255" key="1">
    <source>
        <dbReference type="HAMAP-Rule" id="MF_00093"/>
    </source>
</evidence>
<evidence type="ECO:0000256" key="2">
    <source>
        <dbReference type="SAM" id="MobiDB-lite"/>
    </source>
</evidence>